<sequence>MDLKTSNSPVIADPLPKLALPSAVMTYTTPTSFPSTGLYLNTPKKKPLPGKIEEVRAAGWLDLMLASSPPRKRQTKDFANDVQADELDLLYRNWVVNHPSALTSFEDIVNLARGKRLALFLDYDGTLSPIVDNPENAVMSDEMRSAVKHVASLFPTAIISGRSRDKVFDFVKLTELYYAGSHGMDIMGPVRKSDSSGQHVECIRSTDSEGKEVNLFQPASEFLPMISEVYKKLSESIKDIDGARMEDNKFCVSVHYRNVAPHDYGEVHQRVTAVLKNYPCLRLTHGRKVLEVRPVIDWNKGKAVEFLLESLGLCGKEDVLPIYVGDDKTDEDAFKVLKANSIGFGILVSSVPKDTDAFYSVRDPAEVMEFLKKLASWKEEST</sequence>
<protein>
    <recommendedName>
        <fullName>Probable trehalose-phosphate phosphatase 2</fullName>
        <shortName>OsTPP2</shortName>
        <ecNumber>3.1.3.12</ecNumber>
    </recommendedName>
    <alternativeName>
        <fullName>Trehalose 6-phosphate phosphatase</fullName>
    </alternativeName>
</protein>
<evidence type="ECO:0000250" key="1"/>
<evidence type="ECO:0000269" key="2">
    <source>
    </source>
</evidence>
<evidence type="ECO:0000305" key="3"/>
<proteinExistence type="evidence at protein level"/>
<keyword id="KW-0378">Hydrolase</keyword>
<keyword id="KW-1185">Reference proteome</keyword>
<keyword id="KW-0346">Stress response</keyword>
<name>TPP2_ORYSJ</name>
<reference key="1">
    <citation type="journal article" date="2007" name="FEBS J.">
        <title>Biochemical characterization of rice trehalose-6-phosphate phosphatases supports distinctive functions of these plant enzymes.</title>
        <authorList>
            <person name="Shima S."/>
            <person name="Matsui H."/>
            <person name="Tahara S."/>
            <person name="Imai R."/>
        </authorList>
    </citation>
    <scope>NUCLEOTIDE SEQUENCE [MRNA]</scope>
    <scope>FUNCTION</scope>
    <scope>CATALYTIC ACTIVITY</scope>
    <scope>BIOPHYSICOCHEMICAL PROPERTIES</scope>
    <scope>TISSUE SPECIFICITY</scope>
    <scope>INDUCTION</scope>
    <source>
        <strain>cv. Yukihikari</strain>
    </source>
</reference>
<reference key="2">
    <citation type="journal article" date="2003" name="Science">
        <title>In-depth view of structure, activity, and evolution of rice chromosome 10.</title>
        <authorList>
            <person name="Yu Y."/>
            <person name="Rambo T."/>
            <person name="Currie J."/>
            <person name="Saski C."/>
            <person name="Kim H.-R."/>
            <person name="Collura K."/>
            <person name="Thompson S."/>
            <person name="Simmons J."/>
            <person name="Yang T.-J."/>
            <person name="Nah G."/>
            <person name="Patel A.J."/>
            <person name="Thurmond S."/>
            <person name="Henry D."/>
            <person name="Oates R."/>
            <person name="Palmer M."/>
            <person name="Pries G."/>
            <person name="Gibson J."/>
            <person name="Anderson H."/>
            <person name="Paradkar M."/>
            <person name="Crane L."/>
            <person name="Dale J."/>
            <person name="Carver M.B."/>
            <person name="Wood T."/>
            <person name="Frisch D."/>
            <person name="Engler F."/>
            <person name="Soderlund C."/>
            <person name="Palmer L.E."/>
            <person name="Teytelman L."/>
            <person name="Nascimento L."/>
            <person name="De la Bastide M."/>
            <person name="Spiegel L."/>
            <person name="Ware D."/>
            <person name="O'Shaughnessy A."/>
            <person name="Dike S."/>
            <person name="Dedhia N."/>
            <person name="Preston R."/>
            <person name="Huang E."/>
            <person name="Ferraro K."/>
            <person name="Kuit K."/>
            <person name="Miller B."/>
            <person name="Zutavern T."/>
            <person name="Katzenberger F."/>
            <person name="Muller S."/>
            <person name="Balija V."/>
            <person name="Martienssen R.A."/>
            <person name="Stein L."/>
            <person name="Minx P."/>
            <person name="Johnson D."/>
            <person name="Cordum H."/>
            <person name="Mardis E."/>
            <person name="Cheng Z."/>
            <person name="Jiang J."/>
            <person name="Wilson R."/>
            <person name="McCombie W.R."/>
            <person name="Wing R.A."/>
            <person name="Yuan Q."/>
            <person name="Ouyang S."/>
            <person name="Liu J."/>
            <person name="Jones K.M."/>
            <person name="Gansberger K."/>
            <person name="Moffat K."/>
            <person name="Hill J."/>
            <person name="Tsitrin T."/>
            <person name="Overton L."/>
            <person name="Bera J."/>
            <person name="Kim M."/>
            <person name="Jin S."/>
            <person name="Tallon L."/>
            <person name="Ciecko A."/>
            <person name="Pai G."/>
            <person name="Van Aken S."/>
            <person name="Utterback T."/>
            <person name="Reidmuller S."/>
            <person name="Bormann J."/>
            <person name="Feldblyum T."/>
            <person name="Hsiao J."/>
            <person name="Zismann V."/>
            <person name="Blunt S."/>
            <person name="de Vazeille A.R."/>
            <person name="Shaffer T."/>
            <person name="Koo H."/>
            <person name="Suh B."/>
            <person name="Yang Q."/>
            <person name="Haas B."/>
            <person name="Peterson J."/>
            <person name="Pertea M."/>
            <person name="Volfovsky N."/>
            <person name="Wortman J."/>
            <person name="White O."/>
            <person name="Salzberg S.L."/>
            <person name="Fraser C.M."/>
            <person name="Buell C.R."/>
            <person name="Messing J."/>
            <person name="Song R."/>
            <person name="Fuks G."/>
            <person name="Llaca V."/>
            <person name="Kovchak S."/>
            <person name="Young S."/>
            <person name="Bowers J.E."/>
            <person name="Paterson A.H."/>
            <person name="Johns M.A."/>
            <person name="Mao L."/>
            <person name="Pan H."/>
            <person name="Dean R.A."/>
        </authorList>
    </citation>
    <scope>NUCLEOTIDE SEQUENCE [LARGE SCALE GENOMIC DNA]</scope>
    <source>
        <strain>cv. Nipponbare</strain>
    </source>
</reference>
<reference key="3">
    <citation type="journal article" date="2005" name="Nature">
        <title>The map-based sequence of the rice genome.</title>
        <authorList>
            <consortium name="International rice genome sequencing project (IRGSP)"/>
        </authorList>
    </citation>
    <scope>NUCLEOTIDE SEQUENCE [LARGE SCALE GENOMIC DNA]</scope>
    <source>
        <strain>cv. Nipponbare</strain>
    </source>
</reference>
<reference key="4">
    <citation type="journal article" date="2008" name="Nucleic Acids Res.">
        <title>The rice annotation project database (RAP-DB): 2008 update.</title>
        <authorList>
            <consortium name="The rice annotation project (RAP)"/>
        </authorList>
    </citation>
    <scope>GENOME REANNOTATION</scope>
    <source>
        <strain>cv. Nipponbare</strain>
    </source>
</reference>
<reference key="5">
    <citation type="journal article" date="2013" name="Rice">
        <title>Improvement of the Oryza sativa Nipponbare reference genome using next generation sequence and optical map data.</title>
        <authorList>
            <person name="Kawahara Y."/>
            <person name="de la Bastide M."/>
            <person name="Hamilton J.P."/>
            <person name="Kanamori H."/>
            <person name="McCombie W.R."/>
            <person name="Ouyang S."/>
            <person name="Schwartz D.C."/>
            <person name="Tanaka T."/>
            <person name="Wu J."/>
            <person name="Zhou S."/>
            <person name="Childs K.L."/>
            <person name="Davidson R.M."/>
            <person name="Lin H."/>
            <person name="Quesada-Ocampo L."/>
            <person name="Vaillancourt B."/>
            <person name="Sakai H."/>
            <person name="Lee S.S."/>
            <person name="Kim J."/>
            <person name="Numa H."/>
            <person name="Itoh T."/>
            <person name="Buell C.R."/>
            <person name="Matsumoto T."/>
        </authorList>
    </citation>
    <scope>GENOME REANNOTATION</scope>
    <source>
        <strain>cv. Nipponbare</strain>
    </source>
</reference>
<reference key="6">
    <citation type="journal article" date="2005" name="Plant Mol. Biol.">
        <title>Functional identification of a trehalose 6-phosphate phosphatase gene that is involved in transient induction of trehalose biosynthesis during chilling stress in rice.</title>
        <authorList>
            <person name="Pramanik M.H."/>
            <person name="Imai R."/>
        </authorList>
    </citation>
    <scope>GENE FAMILY</scope>
    <scope>NOMENCLATURE</scope>
    <source>
        <strain>cv. Yukihikari</strain>
    </source>
</reference>
<accession>Q9FWQ2</accession>
<accession>A0A0P0XX17</accession>
<accession>Q7XCC1</accession>
<organism>
    <name type="scientific">Oryza sativa subsp. japonica</name>
    <name type="common">Rice</name>
    <dbReference type="NCBI Taxonomy" id="39947"/>
    <lineage>
        <taxon>Eukaryota</taxon>
        <taxon>Viridiplantae</taxon>
        <taxon>Streptophyta</taxon>
        <taxon>Embryophyta</taxon>
        <taxon>Tracheophyta</taxon>
        <taxon>Spermatophyta</taxon>
        <taxon>Magnoliopsida</taxon>
        <taxon>Liliopsida</taxon>
        <taxon>Poales</taxon>
        <taxon>Poaceae</taxon>
        <taxon>BOP clade</taxon>
        <taxon>Oryzoideae</taxon>
        <taxon>Oryzeae</taxon>
        <taxon>Oryzinae</taxon>
        <taxon>Oryza</taxon>
        <taxon>Oryza sativa</taxon>
    </lineage>
</organism>
<gene>
    <name type="primary">TPP2</name>
    <name type="ordered locus">Os10g0553300</name>
    <name type="ordered locus">LOC_Os10g40550</name>
    <name type="ORF">OSJNBa0015J15.3</name>
</gene>
<comment type="function">
    <text evidence="2">Removes the phosphate from trehalose 6-phosphate to produce free trehalose. Trehalose accumulation in plant may improve abiotic stress tolerance.</text>
</comment>
<comment type="catalytic activity">
    <reaction evidence="2">
        <text>alpha,alpha-trehalose 6-phosphate + H2O = alpha,alpha-trehalose + phosphate</text>
        <dbReference type="Rhea" id="RHEA:23420"/>
        <dbReference type="ChEBI" id="CHEBI:15377"/>
        <dbReference type="ChEBI" id="CHEBI:16551"/>
        <dbReference type="ChEBI" id="CHEBI:43474"/>
        <dbReference type="ChEBI" id="CHEBI:58429"/>
        <dbReference type="EC" id="3.1.3.12"/>
    </reaction>
</comment>
<comment type="cofactor">
    <cofactor evidence="1">
        <name>a divalent metal cation</name>
        <dbReference type="ChEBI" id="CHEBI:60240"/>
    </cofactor>
</comment>
<comment type="biophysicochemical properties">
    <kinetics>
        <KM evidence="2">186 uM for trehalose 6-phosphate</KM>
    </kinetics>
    <phDependence>
        <text evidence="2">Optimum pH is 6.5.</text>
    </phDependence>
</comment>
<comment type="pathway">
    <text>Glycan biosynthesis; trehalose biosynthesis.</text>
</comment>
<comment type="tissue specificity">
    <text evidence="2">Expressed in roots and shoots.</text>
</comment>
<comment type="induction">
    <text evidence="2">By cold, drought, salt stress and abscisic acid (ABA).</text>
</comment>
<comment type="similarity">
    <text evidence="3">Belongs to the trehalose phosphatase family.</text>
</comment>
<feature type="chain" id="PRO_0000417654" description="Probable trehalose-phosphate phosphatase 2">
    <location>
        <begin position="1"/>
        <end position="382"/>
    </location>
</feature>
<dbReference type="EC" id="3.1.3.12"/>
<dbReference type="EMBL" id="AB277360">
    <property type="protein sequence ID" value="BAF34519.1"/>
    <property type="molecule type" value="mRNA"/>
</dbReference>
<dbReference type="EMBL" id="AC026758">
    <property type="protein sequence ID" value="AAG13478.1"/>
    <property type="molecule type" value="Genomic_DNA"/>
</dbReference>
<dbReference type="EMBL" id="DP000086">
    <property type="protein sequence ID" value="AAP54952.1"/>
    <property type="molecule type" value="Genomic_DNA"/>
</dbReference>
<dbReference type="EMBL" id="DP000086">
    <property type="protein sequence ID" value="ABB47970.1"/>
    <property type="molecule type" value="Genomic_DNA"/>
</dbReference>
<dbReference type="EMBL" id="AP008216">
    <property type="protein sequence ID" value="BAF27173.1"/>
    <property type="molecule type" value="Genomic_DNA"/>
</dbReference>
<dbReference type="EMBL" id="AP014966">
    <property type="protein sequence ID" value="BAT11974.1"/>
    <property type="molecule type" value="Genomic_DNA"/>
</dbReference>
<dbReference type="RefSeq" id="XP_015612912.1">
    <property type="nucleotide sequence ID" value="XM_015757426.1"/>
</dbReference>
<dbReference type="RefSeq" id="XP_015612914.1">
    <property type="nucleotide sequence ID" value="XM_015757428.1"/>
</dbReference>
<dbReference type="RefSeq" id="XP_015612915.1">
    <property type="nucleotide sequence ID" value="XM_015757429.1"/>
</dbReference>
<dbReference type="SMR" id="Q9FWQ2"/>
<dbReference type="FunCoup" id="Q9FWQ2">
    <property type="interactions" value="140"/>
</dbReference>
<dbReference type="STRING" id="39947.Q9FWQ2"/>
<dbReference type="PaxDb" id="39947-Q9FWQ2"/>
<dbReference type="EnsemblPlants" id="Os10t0553300-01">
    <property type="protein sequence ID" value="Os10t0553300-01"/>
    <property type="gene ID" value="Os10g0553300"/>
</dbReference>
<dbReference type="GeneID" id="4349333"/>
<dbReference type="Gramene" id="Os10t0553300-01">
    <property type="protein sequence ID" value="Os10t0553300-01"/>
    <property type="gene ID" value="Os10g0553300"/>
</dbReference>
<dbReference type="KEGG" id="dosa:Os10g0553300"/>
<dbReference type="KEGG" id="osa:4349333"/>
<dbReference type="eggNOG" id="KOG1050">
    <property type="taxonomic scope" value="Eukaryota"/>
</dbReference>
<dbReference type="HOGENOM" id="CLU_037265_1_0_1"/>
<dbReference type="InParanoid" id="Q9FWQ2"/>
<dbReference type="OMA" id="VKWAKLE"/>
<dbReference type="OrthoDB" id="411251at2759"/>
<dbReference type="BRENDA" id="3.1.3.12">
    <property type="organism ID" value="8948"/>
</dbReference>
<dbReference type="PlantReactome" id="R-OSA-1119516">
    <property type="pathway name" value="Trehalose biosynthesis I"/>
</dbReference>
<dbReference type="UniPathway" id="UPA00299"/>
<dbReference type="Proteomes" id="UP000000763">
    <property type="component" value="Chromosome 10"/>
</dbReference>
<dbReference type="Proteomes" id="UP000059680">
    <property type="component" value="Chromosome 10"/>
</dbReference>
<dbReference type="GO" id="GO:0004805">
    <property type="term" value="F:trehalose-phosphatase activity"/>
    <property type="evidence" value="ECO:0000314"/>
    <property type="project" value="UniProtKB"/>
</dbReference>
<dbReference type="GO" id="GO:0005992">
    <property type="term" value="P:trehalose biosynthetic process"/>
    <property type="evidence" value="ECO:0000314"/>
    <property type="project" value="UniProtKB"/>
</dbReference>
<dbReference type="CDD" id="cd01627">
    <property type="entry name" value="HAD_TPP"/>
    <property type="match status" value="1"/>
</dbReference>
<dbReference type="FunFam" id="3.30.70.1020:FF:000004">
    <property type="entry name" value="Trehalose 6-phosphate phosphatase"/>
    <property type="match status" value="1"/>
</dbReference>
<dbReference type="FunFam" id="3.40.50.1000:FF:000073">
    <property type="entry name" value="Trehalose 6-phosphate phosphatase"/>
    <property type="match status" value="1"/>
</dbReference>
<dbReference type="FunFam" id="3.40.50.1000:FF:000122">
    <property type="entry name" value="Trehalose 6-phosphate phosphatase"/>
    <property type="match status" value="1"/>
</dbReference>
<dbReference type="Gene3D" id="3.40.50.1000">
    <property type="entry name" value="HAD superfamily/HAD-like"/>
    <property type="match status" value="2"/>
</dbReference>
<dbReference type="InterPro" id="IPR036412">
    <property type="entry name" value="HAD-like_sf"/>
</dbReference>
<dbReference type="InterPro" id="IPR006379">
    <property type="entry name" value="HAD-SF_hydro_IIB"/>
</dbReference>
<dbReference type="InterPro" id="IPR023214">
    <property type="entry name" value="HAD_sf"/>
</dbReference>
<dbReference type="InterPro" id="IPR044651">
    <property type="entry name" value="OTSB-like"/>
</dbReference>
<dbReference type="InterPro" id="IPR003337">
    <property type="entry name" value="Trehalose_PPase"/>
</dbReference>
<dbReference type="NCBIfam" id="TIGR01484">
    <property type="entry name" value="HAD-SF-IIB"/>
    <property type="match status" value="1"/>
</dbReference>
<dbReference type="NCBIfam" id="TIGR00685">
    <property type="entry name" value="T6PP"/>
    <property type="match status" value="1"/>
</dbReference>
<dbReference type="PANTHER" id="PTHR43768">
    <property type="entry name" value="TREHALOSE 6-PHOSPHATE PHOSPHATASE"/>
    <property type="match status" value="1"/>
</dbReference>
<dbReference type="PANTHER" id="PTHR43768:SF17">
    <property type="entry name" value="TREHALOSE-PHOSPHATE PHOSPHATASE F-RELATED"/>
    <property type="match status" value="1"/>
</dbReference>
<dbReference type="Pfam" id="PF02358">
    <property type="entry name" value="Trehalose_PPase"/>
    <property type="match status" value="1"/>
</dbReference>
<dbReference type="SUPFAM" id="SSF56784">
    <property type="entry name" value="HAD-like"/>
    <property type="match status" value="1"/>
</dbReference>